<proteinExistence type="evidence at protein level"/>
<organismHost>
    <name type="scientific">Macaca mulatta</name>
    <name type="common">Rhesus macaque</name>
    <dbReference type="NCBI Taxonomy" id="9544"/>
</organismHost>
<dbReference type="EMBL" id="L33364">
    <property type="protein sequence ID" value="AAA47349.1"/>
    <property type="molecule type" value="Genomic_RNA"/>
</dbReference>
<dbReference type="SMR" id="Q86218"/>
<dbReference type="GO" id="GO:0039616">
    <property type="term" value="C:T=2 icosahedral viral capsid"/>
    <property type="evidence" value="ECO:0007669"/>
    <property type="project" value="UniProtKB-UniRule"/>
</dbReference>
<dbReference type="GO" id="GO:0039625">
    <property type="term" value="C:viral inner capsid"/>
    <property type="evidence" value="ECO:0007669"/>
    <property type="project" value="UniProtKB-UniRule"/>
</dbReference>
<dbReference type="GO" id="GO:0019013">
    <property type="term" value="C:viral nucleocapsid"/>
    <property type="evidence" value="ECO:0007669"/>
    <property type="project" value="UniProtKB-UniRule"/>
</dbReference>
<dbReference type="GO" id="GO:0003723">
    <property type="term" value="F:RNA binding"/>
    <property type="evidence" value="ECO:0007669"/>
    <property type="project" value="UniProtKB-UniRule"/>
</dbReference>
<dbReference type="HAMAP" id="MF_04123">
    <property type="entry name" value="Rota_VP2"/>
    <property type="match status" value="1"/>
</dbReference>
<dbReference type="HAMAP" id="MF_04127">
    <property type="entry name" value="Rota_VP2_A"/>
    <property type="match status" value="1"/>
</dbReference>
<dbReference type="InterPro" id="IPR007779">
    <property type="entry name" value="Rotavirus_VP2"/>
</dbReference>
<dbReference type="Pfam" id="PF05087">
    <property type="entry name" value="Rota_VP2"/>
    <property type="match status" value="1"/>
</dbReference>
<keyword id="KW-0167">Capsid protein</keyword>
<keyword id="KW-1153">Inner capsid protein</keyword>
<keyword id="KW-0677">Repeat</keyword>
<keyword id="KW-0694">RNA-binding</keyword>
<keyword id="KW-1141">T=2 icosahedral capsid protein</keyword>
<keyword id="KW-0832">Ubl conjugation</keyword>
<keyword id="KW-0946">Virion</keyword>
<accession>Q86218</accession>
<evidence type="ECO:0000255" key="1">
    <source>
        <dbReference type="HAMAP-Rule" id="MF_04127"/>
    </source>
</evidence>
<evidence type="ECO:0000256" key="2">
    <source>
        <dbReference type="SAM" id="MobiDB-lite"/>
    </source>
</evidence>
<evidence type="ECO:0000269" key="3">
    <source>
    </source>
</evidence>
<feature type="chain" id="PRO_0000368065" description="Inner capsid protein VP2">
    <location>
        <begin position="1"/>
        <end position="882"/>
    </location>
</feature>
<feature type="region of interest" description="5-fold hub; involved in the encapsidation of VP1 and VP3" evidence="1">
    <location>
        <begin position="1"/>
        <end position="82"/>
    </location>
</feature>
<feature type="region of interest" description="Disordered" evidence="2">
    <location>
        <begin position="1"/>
        <end position="45"/>
    </location>
</feature>
<feature type="region of interest" description="Hydrophobic" evidence="1">
    <location>
        <begin position="396"/>
        <end position="416"/>
    </location>
</feature>
<feature type="region of interest" description="Hydrophobic" evidence="1">
    <location>
        <begin position="424"/>
        <end position="444"/>
    </location>
</feature>
<feature type="compositionally biased region" description="Basic and acidic residues" evidence="2">
    <location>
        <begin position="9"/>
        <end position="27"/>
    </location>
</feature>
<feature type="compositionally biased region" description="Polar residues" evidence="2">
    <location>
        <begin position="28"/>
        <end position="39"/>
    </location>
</feature>
<feature type="site" description="Interaction with the intermediate capsid protein VP6" evidence="1">
    <location>
        <position position="222"/>
    </location>
</feature>
<feature type="site" description="Interaction with the intermediate capsid protein VP6" evidence="1">
    <location>
        <position position="226"/>
    </location>
</feature>
<feature type="site" description="Interaction with the intermediate capsid protein VP6" evidence="1">
    <location>
        <position position="230"/>
    </location>
</feature>
<feature type="site" description="Interaction with the intermediate capsid protein VP6" evidence="1">
    <location>
        <position position="841"/>
    </location>
</feature>
<feature type="site" description="Interaction with the intermediate capsid protein VP6" evidence="1">
    <location>
        <position position="843"/>
    </location>
</feature>
<reference key="1">
    <citation type="journal article" date="1994" name="Virology">
        <title>Temperature-sensitive lesions in the capsid proteins of the rotavirus mutants tsF and tsG that affect virion assembly.</title>
        <authorList>
            <person name="Mansell E.A."/>
            <person name="Ramig R.F."/>
            <person name="Patton J.T."/>
        </authorList>
    </citation>
    <scope>NUCLEOTIDE SEQUENCE [GENOMIC RNA]</scope>
</reference>
<reference key="2">
    <citation type="journal article" date="2014" name="J. Virol.">
        <title>Probing the sites of interactions of rotaviral proteins involved in replication.</title>
        <authorList>
            <person name="Viskovska M."/>
            <person name="Anish R."/>
            <person name="Hu L."/>
            <person name="Chow D.C."/>
            <person name="Hurwitz A.M."/>
            <person name="Brown N.G."/>
            <person name="Palzkill T."/>
            <person name="Estes M.K."/>
            <person name="Prasad B.V."/>
        </authorList>
    </citation>
    <scope>INTERACTION WITH NSP2</scope>
</reference>
<organism>
    <name type="scientific">Rotavirus A (strain RVA/SA11-Ramig/G3P[X])</name>
    <name type="common">RV-A</name>
    <name type="synonym">Simian Agent 11 (strain Ramig)</name>
    <dbReference type="NCBI Taxonomy" id="36435"/>
    <lineage>
        <taxon>Viruses</taxon>
        <taxon>Riboviria</taxon>
        <taxon>Orthornavirae</taxon>
        <taxon>Duplornaviricota</taxon>
        <taxon>Resentoviricetes</taxon>
        <taxon>Reovirales</taxon>
        <taxon>Sedoreoviridae</taxon>
        <taxon>Rotavirus</taxon>
        <taxon>Rotavirus A</taxon>
    </lineage>
</organism>
<sequence>MAYRKRGARRETNLKQDERMQEKEDSKNINNDSPKSQLSEKVLSKKEEIITDNQEEVKISDEVKKSNKEESKQLLEVLKTKEEHQKEVQYEILQKTIPTFEPKESILKKLEDIKPEQAKKQTKLFRIFEPKQLPIYRANGERELRNRWYWKLKRDTLPDGDYDVREYFLNLYDQVLMEMPDYLLLKDMAVENKNSRDAGKVVDSETAAICDAIFQDEETEGAVRRFIAEMRQRVQADRNVVNYPSILHPIDHAFNGYFLQHQLVEPLNNDIIFNYIPERIRNDVNYILNMDRNLPSTARYIRPNLLQDRLNLHDNFESLWDTITTSNYILARSVVPDLKELVSTEAQIQKMSQDLQLEALTIQSETQFLTGINSQAANDCFKTLIAAMLSQRTMSLDFVTTNYMSLISGMWLLTVIPNDMFIRESLVACQLAIINTIVYPAFGMQRMHYRNGDPQTPFQIAEQQIQNFQVANWLHFVNYNQFRQVVIDGVLNQVLNDNIRNGHVVNQLMEALMQLSRQQFPTMPVDYKRSIQRGILLLSNRLGQLVDLTRLLSYNYETLMACITMNMQHVQTLTTEKLQLTSVTSLCMLIGNATVIPSPQTLFHYYNVNVNFHSNYNERINDAVAIITAANRLNLYQKKMKSIVEDFLKRLQIFDVARVPDDQMYRLRDRLRLLPVEIRRLDIFNLIAMNMEQIERASDKIAQGVIIAYRDMQLERDEMYGYVNIARNLDGFQQINLEELMRSGDYAQITNMLLNNQPVALVGALPFITDSSVISLIAKLDATVFAQIVKLRKVDTLKPILYKINSDSNDFYLVANYDWIPTSTTKVYKQVPQQFDFRASMHMLTSNLTFTVYSDLLAFVSADTVEPINAVAFDNMRIMNEL</sequence>
<name>VP2_ROTSR</name>
<comment type="function">
    <text evidence="1">Inner capsid protein that self-assembles to form an icosahedral capsid with a T=2 symmetry, which consists of 120 copies of VP2, with channels at each of its five-fold vertices. This capsid constitutes the innermost concentric layer of the viral mature particle. It encapsidates the polymerase VP1, the capping enzyme VP3 and the genomic dsRNA, thereby defining the core. The innermost VP2 capsid and the intermediate VP6 capsid remain intact following cell entry to protect the dsRNA from degradation and to prevent unfavorable antiviral responses in the host cell during all the replication cycle of the virus. Nascent transcripts are transcribed within the structural confines of this double-layered particle (DLP) and are extruded through the channels formed by VP2 N-termini. VP2 is required for the replicase activity of VP1 polymerase. Probably recruits a copy of a VP1-VP3 complex, potentially along with a segment of plus-strand RNA, as a decamer of VP2 assembles. May activate the autoinhibited VP1/RNA complex to coordinate packaging and genome replication.</text>
</comment>
<comment type="subunit">
    <text evidence="1 3">Homodecamer; each decamer is made up of two conformers of VP2, called VP2A and VP2B. Interacts with a VP1-VP3 complex. Interacts with the intermediate capsid protein VP6. Interacts with NSP5 (By similarity). Interacts (via N-terminus) with NSP2 (PubMed:25165107).</text>
</comment>
<comment type="subcellular location">
    <subcellularLocation>
        <location evidence="1">Virion</location>
    </subcellularLocation>
    <text evidence="1">Inner capsid protein. Also found in spherical cytoplasmic structures, called virus factories, that appear early after infection and are the site of viral replication and packaging.</text>
</comment>
<comment type="domain">
    <text evidence="1">The N-terminus binds RNA. It is necessary for encapsidation of VP1 and VP3. The N-termini of 10 VP2 molecules form a cylindrical hub underneath each 5-fold axis of the inner capsid.</text>
</comment>
<comment type="PTM">
    <text evidence="1">Sumoylated with SUMO1 and SUMO2. Sumoylation of viral proteins seems to have a positive role on viral replication.</text>
</comment>
<comment type="similarity">
    <text evidence="1">Belongs to the rotavirus VP2 family.</text>
</comment>
<protein>
    <recommendedName>
        <fullName evidence="1">Inner capsid protein VP2</fullName>
    </recommendedName>
</protein>